<comment type="function">
    <text evidence="1">Catalyzes the attachment of serine to tRNA(Ser). Is also able to aminoacylate tRNA(Sec) with serine, to form the misacylated tRNA L-seryl-tRNA(Sec), which will be further converted into selenocysteinyl-tRNA(Sec).</text>
</comment>
<comment type="catalytic activity">
    <reaction evidence="1">
        <text>tRNA(Ser) + L-serine + ATP = L-seryl-tRNA(Ser) + AMP + diphosphate + H(+)</text>
        <dbReference type="Rhea" id="RHEA:12292"/>
        <dbReference type="Rhea" id="RHEA-COMP:9669"/>
        <dbReference type="Rhea" id="RHEA-COMP:9703"/>
        <dbReference type="ChEBI" id="CHEBI:15378"/>
        <dbReference type="ChEBI" id="CHEBI:30616"/>
        <dbReference type="ChEBI" id="CHEBI:33019"/>
        <dbReference type="ChEBI" id="CHEBI:33384"/>
        <dbReference type="ChEBI" id="CHEBI:78442"/>
        <dbReference type="ChEBI" id="CHEBI:78533"/>
        <dbReference type="ChEBI" id="CHEBI:456215"/>
        <dbReference type="EC" id="6.1.1.11"/>
    </reaction>
</comment>
<comment type="catalytic activity">
    <reaction evidence="1">
        <text>tRNA(Sec) + L-serine + ATP = L-seryl-tRNA(Sec) + AMP + diphosphate + H(+)</text>
        <dbReference type="Rhea" id="RHEA:42580"/>
        <dbReference type="Rhea" id="RHEA-COMP:9742"/>
        <dbReference type="Rhea" id="RHEA-COMP:10128"/>
        <dbReference type="ChEBI" id="CHEBI:15378"/>
        <dbReference type="ChEBI" id="CHEBI:30616"/>
        <dbReference type="ChEBI" id="CHEBI:33019"/>
        <dbReference type="ChEBI" id="CHEBI:33384"/>
        <dbReference type="ChEBI" id="CHEBI:78442"/>
        <dbReference type="ChEBI" id="CHEBI:78533"/>
        <dbReference type="ChEBI" id="CHEBI:456215"/>
        <dbReference type="EC" id="6.1.1.11"/>
    </reaction>
</comment>
<comment type="pathway">
    <text evidence="1">Aminoacyl-tRNA biosynthesis; selenocysteinyl-tRNA(Sec) biosynthesis; L-seryl-tRNA(Sec) from L-serine and tRNA(Sec): step 1/1.</text>
</comment>
<comment type="subunit">
    <text evidence="1">Homodimer. The tRNA molecule binds across the dimer.</text>
</comment>
<comment type="subcellular location">
    <subcellularLocation>
        <location evidence="1">Cytoplasm</location>
    </subcellularLocation>
</comment>
<comment type="domain">
    <text evidence="1">Consists of two distinct domains, a catalytic core and a N-terminal extension that is involved in tRNA binding.</text>
</comment>
<comment type="similarity">
    <text evidence="1">Belongs to the class-II aminoacyl-tRNA synthetase family. Type-1 seryl-tRNA synthetase subfamily.</text>
</comment>
<protein>
    <recommendedName>
        <fullName evidence="1">Serine--tRNA ligase</fullName>
        <ecNumber evidence="1">6.1.1.11</ecNumber>
    </recommendedName>
    <alternativeName>
        <fullName evidence="1">Seryl-tRNA synthetase</fullName>
        <shortName evidence="1">SerRS</shortName>
    </alternativeName>
    <alternativeName>
        <fullName evidence="1">Seryl-tRNA(Ser/Sec) synthetase</fullName>
    </alternativeName>
</protein>
<gene>
    <name evidence="1" type="primary">serS</name>
    <name type="ordered locus">BB3908</name>
</gene>
<keyword id="KW-0030">Aminoacyl-tRNA synthetase</keyword>
<keyword id="KW-0067">ATP-binding</keyword>
<keyword id="KW-0963">Cytoplasm</keyword>
<keyword id="KW-0436">Ligase</keyword>
<keyword id="KW-0547">Nucleotide-binding</keyword>
<keyword id="KW-0648">Protein biosynthesis</keyword>
<organism>
    <name type="scientific">Bordetella bronchiseptica (strain ATCC BAA-588 / NCTC 13252 / RB50)</name>
    <name type="common">Alcaligenes bronchisepticus</name>
    <dbReference type="NCBI Taxonomy" id="257310"/>
    <lineage>
        <taxon>Bacteria</taxon>
        <taxon>Pseudomonadati</taxon>
        <taxon>Pseudomonadota</taxon>
        <taxon>Betaproteobacteria</taxon>
        <taxon>Burkholderiales</taxon>
        <taxon>Alcaligenaceae</taxon>
        <taxon>Bordetella</taxon>
    </lineage>
</organism>
<dbReference type="EC" id="6.1.1.11" evidence="1"/>
<dbReference type="EMBL" id="BX640448">
    <property type="protein sequence ID" value="CAE35881.1"/>
    <property type="molecule type" value="Genomic_DNA"/>
</dbReference>
<dbReference type="RefSeq" id="WP_003814026.1">
    <property type="nucleotide sequence ID" value="NC_002927.3"/>
</dbReference>
<dbReference type="SMR" id="Q7WCM7"/>
<dbReference type="GeneID" id="93205244"/>
<dbReference type="KEGG" id="bbr:BB3908"/>
<dbReference type="eggNOG" id="COG0172">
    <property type="taxonomic scope" value="Bacteria"/>
</dbReference>
<dbReference type="HOGENOM" id="CLU_023797_1_1_4"/>
<dbReference type="UniPathway" id="UPA00906">
    <property type="reaction ID" value="UER00895"/>
</dbReference>
<dbReference type="Proteomes" id="UP000001027">
    <property type="component" value="Chromosome"/>
</dbReference>
<dbReference type="GO" id="GO:0005737">
    <property type="term" value="C:cytoplasm"/>
    <property type="evidence" value="ECO:0007669"/>
    <property type="project" value="UniProtKB-SubCell"/>
</dbReference>
<dbReference type="GO" id="GO:0005524">
    <property type="term" value="F:ATP binding"/>
    <property type="evidence" value="ECO:0007669"/>
    <property type="project" value="UniProtKB-UniRule"/>
</dbReference>
<dbReference type="GO" id="GO:0004828">
    <property type="term" value="F:serine-tRNA ligase activity"/>
    <property type="evidence" value="ECO:0007669"/>
    <property type="project" value="UniProtKB-UniRule"/>
</dbReference>
<dbReference type="GO" id="GO:0016260">
    <property type="term" value="P:selenocysteine biosynthetic process"/>
    <property type="evidence" value="ECO:0007669"/>
    <property type="project" value="UniProtKB-UniRule"/>
</dbReference>
<dbReference type="GO" id="GO:0006434">
    <property type="term" value="P:seryl-tRNA aminoacylation"/>
    <property type="evidence" value="ECO:0007669"/>
    <property type="project" value="UniProtKB-UniRule"/>
</dbReference>
<dbReference type="CDD" id="cd00770">
    <property type="entry name" value="SerRS_core"/>
    <property type="match status" value="1"/>
</dbReference>
<dbReference type="Gene3D" id="3.30.930.10">
    <property type="entry name" value="Bira Bifunctional Protein, Domain 2"/>
    <property type="match status" value="1"/>
</dbReference>
<dbReference type="Gene3D" id="1.10.287.40">
    <property type="entry name" value="Serine-tRNA synthetase, tRNA binding domain"/>
    <property type="match status" value="1"/>
</dbReference>
<dbReference type="HAMAP" id="MF_00176">
    <property type="entry name" value="Ser_tRNA_synth_type1"/>
    <property type="match status" value="1"/>
</dbReference>
<dbReference type="InterPro" id="IPR002314">
    <property type="entry name" value="aa-tRNA-synt_IIb"/>
</dbReference>
<dbReference type="InterPro" id="IPR006195">
    <property type="entry name" value="aa-tRNA-synth_II"/>
</dbReference>
<dbReference type="InterPro" id="IPR045864">
    <property type="entry name" value="aa-tRNA-synth_II/BPL/LPL"/>
</dbReference>
<dbReference type="InterPro" id="IPR002317">
    <property type="entry name" value="Ser-tRNA-ligase_type_1"/>
</dbReference>
<dbReference type="InterPro" id="IPR015866">
    <property type="entry name" value="Ser-tRNA-synth_1_N"/>
</dbReference>
<dbReference type="InterPro" id="IPR042103">
    <property type="entry name" value="SerRS_1_N_sf"/>
</dbReference>
<dbReference type="InterPro" id="IPR033729">
    <property type="entry name" value="SerRS_core"/>
</dbReference>
<dbReference type="InterPro" id="IPR010978">
    <property type="entry name" value="tRNA-bd_arm"/>
</dbReference>
<dbReference type="NCBIfam" id="TIGR00414">
    <property type="entry name" value="serS"/>
    <property type="match status" value="1"/>
</dbReference>
<dbReference type="PANTHER" id="PTHR43697:SF1">
    <property type="entry name" value="SERINE--TRNA LIGASE"/>
    <property type="match status" value="1"/>
</dbReference>
<dbReference type="PANTHER" id="PTHR43697">
    <property type="entry name" value="SERYL-TRNA SYNTHETASE"/>
    <property type="match status" value="1"/>
</dbReference>
<dbReference type="Pfam" id="PF02403">
    <property type="entry name" value="Seryl_tRNA_N"/>
    <property type="match status" value="1"/>
</dbReference>
<dbReference type="Pfam" id="PF00587">
    <property type="entry name" value="tRNA-synt_2b"/>
    <property type="match status" value="1"/>
</dbReference>
<dbReference type="PIRSF" id="PIRSF001529">
    <property type="entry name" value="Ser-tRNA-synth_IIa"/>
    <property type="match status" value="1"/>
</dbReference>
<dbReference type="PRINTS" id="PR00981">
    <property type="entry name" value="TRNASYNTHSER"/>
</dbReference>
<dbReference type="SUPFAM" id="SSF55681">
    <property type="entry name" value="Class II aaRS and biotin synthetases"/>
    <property type="match status" value="1"/>
</dbReference>
<dbReference type="SUPFAM" id="SSF46589">
    <property type="entry name" value="tRNA-binding arm"/>
    <property type="match status" value="1"/>
</dbReference>
<dbReference type="PROSITE" id="PS50862">
    <property type="entry name" value="AA_TRNA_LIGASE_II"/>
    <property type="match status" value="1"/>
</dbReference>
<proteinExistence type="inferred from homology"/>
<name>SYS_BORBR</name>
<accession>Q7WCM7</accession>
<reference key="1">
    <citation type="journal article" date="2003" name="Nat. Genet.">
        <title>Comparative analysis of the genome sequences of Bordetella pertussis, Bordetella parapertussis and Bordetella bronchiseptica.</title>
        <authorList>
            <person name="Parkhill J."/>
            <person name="Sebaihia M."/>
            <person name="Preston A."/>
            <person name="Murphy L.D."/>
            <person name="Thomson N.R."/>
            <person name="Harris D.E."/>
            <person name="Holden M.T.G."/>
            <person name="Churcher C.M."/>
            <person name="Bentley S.D."/>
            <person name="Mungall K.L."/>
            <person name="Cerdeno-Tarraga A.-M."/>
            <person name="Temple L."/>
            <person name="James K.D."/>
            <person name="Harris B."/>
            <person name="Quail M.A."/>
            <person name="Achtman M."/>
            <person name="Atkin R."/>
            <person name="Baker S."/>
            <person name="Basham D."/>
            <person name="Bason N."/>
            <person name="Cherevach I."/>
            <person name="Chillingworth T."/>
            <person name="Collins M."/>
            <person name="Cronin A."/>
            <person name="Davis P."/>
            <person name="Doggett J."/>
            <person name="Feltwell T."/>
            <person name="Goble A."/>
            <person name="Hamlin N."/>
            <person name="Hauser H."/>
            <person name="Holroyd S."/>
            <person name="Jagels K."/>
            <person name="Leather S."/>
            <person name="Moule S."/>
            <person name="Norberczak H."/>
            <person name="O'Neil S."/>
            <person name="Ormond D."/>
            <person name="Price C."/>
            <person name="Rabbinowitsch E."/>
            <person name="Rutter S."/>
            <person name="Sanders M."/>
            <person name="Saunders D."/>
            <person name="Seeger K."/>
            <person name="Sharp S."/>
            <person name="Simmonds M."/>
            <person name="Skelton J."/>
            <person name="Squares R."/>
            <person name="Squares S."/>
            <person name="Stevens K."/>
            <person name="Unwin L."/>
            <person name="Whitehead S."/>
            <person name="Barrell B.G."/>
            <person name="Maskell D.J."/>
        </authorList>
    </citation>
    <scope>NUCLEOTIDE SEQUENCE [LARGE SCALE GENOMIC DNA]</scope>
    <source>
        <strain>ATCC BAA-588 / NCTC 13252 / RB50</strain>
    </source>
</reference>
<evidence type="ECO:0000255" key="1">
    <source>
        <dbReference type="HAMAP-Rule" id="MF_00176"/>
    </source>
</evidence>
<feature type="chain" id="PRO_0000122010" description="Serine--tRNA ligase">
    <location>
        <begin position="1"/>
        <end position="451"/>
    </location>
</feature>
<feature type="binding site" evidence="1">
    <location>
        <begin position="258"/>
        <end position="260"/>
    </location>
    <ligand>
        <name>L-serine</name>
        <dbReference type="ChEBI" id="CHEBI:33384"/>
    </ligand>
</feature>
<feature type="binding site" evidence="1">
    <location>
        <begin position="289"/>
        <end position="291"/>
    </location>
    <ligand>
        <name>ATP</name>
        <dbReference type="ChEBI" id="CHEBI:30616"/>
    </ligand>
</feature>
<feature type="binding site" evidence="1">
    <location>
        <position position="312"/>
    </location>
    <ligand>
        <name>L-serine</name>
        <dbReference type="ChEBI" id="CHEBI:33384"/>
    </ligand>
</feature>
<feature type="binding site" evidence="1">
    <location>
        <begin position="376"/>
        <end position="379"/>
    </location>
    <ligand>
        <name>ATP</name>
        <dbReference type="ChEBI" id="CHEBI:30616"/>
    </ligand>
</feature>
<feature type="binding site" evidence="1">
    <location>
        <position position="411"/>
    </location>
    <ligand>
        <name>L-serine</name>
        <dbReference type="ChEBI" id="CHEBI:33384"/>
    </ligand>
</feature>
<sequence length="451" mass="49818">MLDPILLRKDLQTVVDRLKSRGVDFDIARFNELESRRKAVQTETESQQARRNALAKQIGQLKGKGAPEAEVQAVMAESQALPARLKALEDELAQTQAQLNDLLMSVPNLPHASVPQGASSDENVEVRRWLPGAADERGNPAALGFEVRDHVAVGEPLGLDFDLAARLSGARFSFMRGQMARLHRALAQFMLDLQTGTHGYTECYTPYIVNSSTLFGTGQLPKFKDDMFFVTKGGGDDEPKVDEQGNPLAREDQYLISTSEITLTSVVRETIVAGADLPLRLTAHTPCFRSEAGSGGRDTRGMIRQHQFDKVEMVQIAHPEHSYEALEEMVGHAERVLQLLELPYRVMLLCTGDMGFGSAKTYDLEVWLPAQDTWREISSVSNCETFQARRMQARFRNAQNKPEYVHTLNGSGLAVGRALVAVLENCQQADGSVRVPAVLQPYMGGLTVLEP</sequence>